<name>CRLS1_ORYSJ</name>
<organism>
    <name type="scientific">Oryza sativa subsp. japonica</name>
    <name type="common">Rice</name>
    <dbReference type="NCBI Taxonomy" id="39947"/>
    <lineage>
        <taxon>Eukaryota</taxon>
        <taxon>Viridiplantae</taxon>
        <taxon>Streptophyta</taxon>
        <taxon>Embryophyta</taxon>
        <taxon>Tracheophyta</taxon>
        <taxon>Spermatophyta</taxon>
        <taxon>Magnoliopsida</taxon>
        <taxon>Liliopsida</taxon>
        <taxon>Poales</taxon>
        <taxon>Poaceae</taxon>
        <taxon>BOP clade</taxon>
        <taxon>Oryzoideae</taxon>
        <taxon>Oryzeae</taxon>
        <taxon>Oryzinae</taxon>
        <taxon>Oryza</taxon>
        <taxon>Oryza sativa</taxon>
    </lineage>
</organism>
<accession>Q8H8U0</accession>
<accession>A0A0P0VW69</accession>
<reference key="1">
    <citation type="journal article" date="2005" name="Genome Res.">
        <title>Sequence, annotation, and analysis of synteny between rice chromosome 3 and diverged grass species.</title>
        <authorList>
            <consortium name="The rice chromosome 3 sequencing consortium"/>
            <person name="Buell C.R."/>
            <person name="Yuan Q."/>
            <person name="Ouyang S."/>
            <person name="Liu J."/>
            <person name="Zhu W."/>
            <person name="Wang A."/>
            <person name="Maiti R."/>
            <person name="Haas B."/>
            <person name="Wortman J."/>
            <person name="Pertea M."/>
            <person name="Jones K.M."/>
            <person name="Kim M."/>
            <person name="Overton L."/>
            <person name="Tsitrin T."/>
            <person name="Fadrosh D."/>
            <person name="Bera J."/>
            <person name="Weaver B."/>
            <person name="Jin S."/>
            <person name="Johri S."/>
            <person name="Reardon M."/>
            <person name="Webb K."/>
            <person name="Hill J."/>
            <person name="Moffat K."/>
            <person name="Tallon L."/>
            <person name="Van Aken S."/>
            <person name="Lewis M."/>
            <person name="Utterback T."/>
            <person name="Feldblyum T."/>
            <person name="Zismann V."/>
            <person name="Iobst S."/>
            <person name="Hsiao J."/>
            <person name="de Vazeille A.R."/>
            <person name="Salzberg S.L."/>
            <person name="White O."/>
            <person name="Fraser C.M."/>
            <person name="Yu Y."/>
            <person name="Kim H."/>
            <person name="Rambo T."/>
            <person name="Currie J."/>
            <person name="Collura K."/>
            <person name="Kernodle-Thompson S."/>
            <person name="Wei F."/>
            <person name="Kudrna K."/>
            <person name="Ammiraju J.S.S."/>
            <person name="Luo M."/>
            <person name="Goicoechea J.L."/>
            <person name="Wing R.A."/>
            <person name="Henry D."/>
            <person name="Oates R."/>
            <person name="Palmer M."/>
            <person name="Pries G."/>
            <person name="Saski C."/>
            <person name="Simmons J."/>
            <person name="Soderlund C."/>
            <person name="Nelson W."/>
            <person name="de la Bastide M."/>
            <person name="Spiegel L."/>
            <person name="Nascimento L."/>
            <person name="Huang E."/>
            <person name="Preston R."/>
            <person name="Zutavern T."/>
            <person name="Palmer L."/>
            <person name="O'Shaughnessy A."/>
            <person name="Dike S."/>
            <person name="McCombie W.R."/>
            <person name="Minx P."/>
            <person name="Cordum H."/>
            <person name="Wilson R."/>
            <person name="Jin W."/>
            <person name="Lee H.R."/>
            <person name="Jiang J."/>
            <person name="Jackson S."/>
        </authorList>
    </citation>
    <scope>NUCLEOTIDE SEQUENCE [LARGE SCALE GENOMIC DNA]</scope>
    <source>
        <strain>cv. Nipponbare</strain>
    </source>
</reference>
<reference key="2">
    <citation type="journal article" date="2005" name="Nature">
        <title>The map-based sequence of the rice genome.</title>
        <authorList>
            <consortium name="International rice genome sequencing project (IRGSP)"/>
        </authorList>
    </citation>
    <scope>NUCLEOTIDE SEQUENCE [LARGE SCALE GENOMIC DNA]</scope>
    <source>
        <strain>cv. Nipponbare</strain>
    </source>
</reference>
<reference key="3">
    <citation type="journal article" date="2008" name="Nucleic Acids Res.">
        <title>The rice annotation project database (RAP-DB): 2008 update.</title>
        <authorList>
            <consortium name="The rice annotation project (RAP)"/>
        </authorList>
    </citation>
    <scope>GENOME REANNOTATION</scope>
    <source>
        <strain>cv. Nipponbare</strain>
    </source>
</reference>
<reference key="4">
    <citation type="journal article" date="2013" name="Rice">
        <title>Improvement of the Oryza sativa Nipponbare reference genome using next generation sequence and optical map data.</title>
        <authorList>
            <person name="Kawahara Y."/>
            <person name="de la Bastide M."/>
            <person name="Hamilton J.P."/>
            <person name="Kanamori H."/>
            <person name="McCombie W.R."/>
            <person name="Ouyang S."/>
            <person name="Schwartz D.C."/>
            <person name="Tanaka T."/>
            <person name="Wu J."/>
            <person name="Zhou S."/>
            <person name="Childs K.L."/>
            <person name="Davidson R.M."/>
            <person name="Lin H."/>
            <person name="Quesada-Ocampo L."/>
            <person name="Vaillancourt B."/>
            <person name="Sakai H."/>
            <person name="Lee S.S."/>
            <person name="Kim J."/>
            <person name="Numa H."/>
            <person name="Itoh T."/>
            <person name="Buell C.R."/>
            <person name="Matsumoto T."/>
        </authorList>
    </citation>
    <scope>GENOME REANNOTATION</scope>
    <source>
        <strain>cv. Nipponbare</strain>
    </source>
</reference>
<reference key="5">
    <citation type="journal article" date="2003" name="Science">
        <title>Collection, mapping, and annotation of over 28,000 cDNA clones from japonica rice.</title>
        <authorList>
            <consortium name="The rice full-length cDNA consortium"/>
        </authorList>
    </citation>
    <scope>NUCLEOTIDE SEQUENCE [LARGE SCALE MRNA]</scope>
    <source>
        <strain>cv. Nipponbare</strain>
    </source>
</reference>
<dbReference type="EC" id="2.7.8.41"/>
<dbReference type="EMBL" id="AC084405">
    <property type="protein sequence ID" value="AAN64500.1"/>
    <property type="molecule type" value="Genomic_DNA"/>
</dbReference>
<dbReference type="EMBL" id="DP000009">
    <property type="protein sequence ID" value="ABF95333.1"/>
    <property type="molecule type" value="Genomic_DNA"/>
</dbReference>
<dbReference type="EMBL" id="AP008209">
    <property type="protein sequence ID" value="BAF11670.1"/>
    <property type="molecule type" value="Genomic_DNA"/>
</dbReference>
<dbReference type="EMBL" id="AP014959">
    <property type="protein sequence ID" value="BAS83595.1"/>
    <property type="molecule type" value="Genomic_DNA"/>
</dbReference>
<dbReference type="EMBL" id="AK070093">
    <property type="protein sequence ID" value="BAG91767.1"/>
    <property type="molecule type" value="mRNA"/>
</dbReference>
<dbReference type="SMR" id="Q8H8U0"/>
<dbReference type="FunCoup" id="Q8H8U0">
    <property type="interactions" value="77"/>
</dbReference>
<dbReference type="STRING" id="39947.Q8H8U0"/>
<dbReference type="PaxDb" id="39947-Q8H8U0"/>
<dbReference type="EnsemblPlants" id="Os03t0283600-01">
    <property type="protein sequence ID" value="Os03t0283600-01"/>
    <property type="gene ID" value="Os03g0283600"/>
</dbReference>
<dbReference type="Gramene" id="Os03t0283600-01">
    <property type="protein sequence ID" value="Os03t0283600-01"/>
    <property type="gene ID" value="Os03g0283600"/>
</dbReference>
<dbReference type="KEGG" id="dosa:Os03g0283600"/>
<dbReference type="eggNOG" id="KOG1617">
    <property type="taxonomic scope" value="Eukaryota"/>
</dbReference>
<dbReference type="HOGENOM" id="CLU_051314_5_0_1"/>
<dbReference type="InParanoid" id="Q8H8U0"/>
<dbReference type="OMA" id="WFRWQSA"/>
<dbReference type="PlantReactome" id="R-OSA-1119260">
    <property type="pathway name" value="Cardiolipin biosynthesis"/>
</dbReference>
<dbReference type="Proteomes" id="UP000000763">
    <property type="component" value="Chromosome 3"/>
</dbReference>
<dbReference type="Proteomes" id="UP000059680">
    <property type="component" value="Chromosome 3"/>
</dbReference>
<dbReference type="ExpressionAtlas" id="Q8H8U0">
    <property type="expression patterns" value="baseline and differential"/>
</dbReference>
<dbReference type="GO" id="GO:0005743">
    <property type="term" value="C:mitochondrial inner membrane"/>
    <property type="evidence" value="ECO:0000250"/>
    <property type="project" value="UniProtKB"/>
</dbReference>
<dbReference type="GO" id="GO:0043337">
    <property type="term" value="F:cardiolipin synthase (CMP-forming)"/>
    <property type="evidence" value="ECO:0007669"/>
    <property type="project" value="UniProtKB-EC"/>
</dbReference>
<dbReference type="GO" id="GO:0008444">
    <property type="term" value="F:CDP-diacylglycerol-glycerol-3-phosphate 3-phosphatidyltransferase activity"/>
    <property type="evidence" value="ECO:0000318"/>
    <property type="project" value="GO_Central"/>
</dbReference>
<dbReference type="GO" id="GO:0046474">
    <property type="term" value="P:glycerophospholipid biosynthetic process"/>
    <property type="evidence" value="ECO:0000318"/>
    <property type="project" value="GO_Central"/>
</dbReference>
<dbReference type="FunFam" id="1.20.120.1760:FF:000008">
    <property type="entry name" value="CDP-diacylglycerol--glycerol-3-phosphate 3-phosphatidyltransferase 2"/>
    <property type="match status" value="1"/>
</dbReference>
<dbReference type="Gene3D" id="1.20.120.1760">
    <property type="match status" value="1"/>
</dbReference>
<dbReference type="InterPro" id="IPR050324">
    <property type="entry name" value="CDP-alcohol_PTase-I"/>
</dbReference>
<dbReference type="InterPro" id="IPR000462">
    <property type="entry name" value="CDP-OH_P_trans"/>
</dbReference>
<dbReference type="InterPro" id="IPR043130">
    <property type="entry name" value="CDP-OH_PTrfase_TM_dom"/>
</dbReference>
<dbReference type="InterPro" id="IPR048254">
    <property type="entry name" value="CDP_ALCOHOL_P_TRANSF_CS"/>
</dbReference>
<dbReference type="InterPro" id="IPR004570">
    <property type="entry name" value="Phosphatidylglycerol_P_synth"/>
</dbReference>
<dbReference type="NCBIfam" id="TIGR00560">
    <property type="entry name" value="pgsA"/>
    <property type="match status" value="1"/>
</dbReference>
<dbReference type="PANTHER" id="PTHR14269:SF62">
    <property type="entry name" value="CDP-DIACYLGLYCEROL--GLYCEROL-3-PHOSPHATE 3-PHOSPHATIDYLTRANSFERASE 1, CHLOROPLASTIC"/>
    <property type="match status" value="1"/>
</dbReference>
<dbReference type="PANTHER" id="PTHR14269">
    <property type="entry name" value="CDP-DIACYLGLYCEROL--GLYCEROL-3-PHOSPHATE 3-PHOSPHATIDYLTRANSFERASE-RELATED"/>
    <property type="match status" value="1"/>
</dbReference>
<dbReference type="Pfam" id="PF01066">
    <property type="entry name" value="CDP-OH_P_transf"/>
    <property type="match status" value="1"/>
</dbReference>
<dbReference type="PROSITE" id="PS00379">
    <property type="entry name" value="CDP_ALCOHOL_P_TRANSF"/>
    <property type="match status" value="1"/>
</dbReference>
<protein>
    <recommendedName>
        <fullName evidence="4">Cardiolipin synthase (CMP-forming)</fullName>
        <shortName>CLS</shortName>
        <ecNumber>2.7.8.41</ecNumber>
    </recommendedName>
</protein>
<proteinExistence type="evidence at transcript level"/>
<sequence length="329" mass="34364">MPPSVATHASLLLKAAAAAAHLHPKPFFSPRAAPPRIPSAPAPPAAGGSRYRPTTTTTAAATATSATAACRWFRWPPPAQAPVRGLCSLPHSGGGGGGGEGMGSEGVGRRRRVVAPAVNGVAKDGAPQPPPPKLLTLPTVLTIGRVAAVPLLISTFYMEGPWAATATTGIFLAAAVTDWLDGYIARKMQLGTPFGAFLDPVADKLMVAATLVLLCTKPLEISLLRDGPWLLTVPAIAIIGREITMSAVREWAASQNTKVLEAVAVNNLGKWKTATQMTALTILLASRDKSLPAQDALVTSGIALLYVSAGLAIWSLVVYMRKIWRILLK</sequence>
<comment type="function">
    <text evidence="1">Catalyzes the synthesis of cardiolipin (CL) (diphosphatidylglycerol) by specifically transferring a phosphatidyl group from CDP-diacylglycerol to phosphatidylglycerol (PG). CL is a key phospholipid in mitochondrial membranes and plays important roles in maintaining the functional integrity and dynamics of mitochondria under both optimal and stress conditions.</text>
</comment>
<comment type="catalytic activity">
    <reaction evidence="1">
        <text>a CDP-1,2-diacyl-sn-glycerol + a 1,2-diacyl-sn-glycero-3-phospho-(1'-sn-glycerol) = a cardiolipin + CMP + H(+)</text>
        <dbReference type="Rhea" id="RHEA:32931"/>
        <dbReference type="ChEBI" id="CHEBI:15378"/>
        <dbReference type="ChEBI" id="CHEBI:58332"/>
        <dbReference type="ChEBI" id="CHEBI:60377"/>
        <dbReference type="ChEBI" id="CHEBI:62237"/>
        <dbReference type="ChEBI" id="CHEBI:64716"/>
        <dbReference type="EC" id="2.7.8.41"/>
    </reaction>
</comment>
<comment type="cofactor">
    <cofactor evidence="1">
        <name>Mn(2+)</name>
        <dbReference type="ChEBI" id="CHEBI:29035"/>
    </cofactor>
</comment>
<comment type="subcellular location">
    <subcellularLocation>
        <location evidence="1">Mitochondrion inner membrane</location>
        <topology evidence="2">Multi-pass membrane protein</topology>
    </subcellularLocation>
</comment>
<comment type="similarity">
    <text evidence="4">Belongs to the CDP-alcohol phosphatidyltransferase class-I family.</text>
</comment>
<feature type="transit peptide" description="Mitochondrion" evidence="2">
    <location>
        <begin position="1"/>
        <end position="34"/>
    </location>
</feature>
<feature type="chain" id="PRO_0000429139" description="Cardiolipin synthase (CMP-forming)">
    <location>
        <begin position="35"/>
        <end position="329"/>
    </location>
</feature>
<feature type="transmembrane region" description="Helical" evidence="2">
    <location>
        <begin position="134"/>
        <end position="154"/>
    </location>
</feature>
<feature type="transmembrane region" description="Helical" evidence="2">
    <location>
        <begin position="156"/>
        <end position="176"/>
    </location>
</feature>
<feature type="transmembrane region" description="Helical" evidence="2">
    <location>
        <begin position="194"/>
        <end position="214"/>
    </location>
</feature>
<feature type="transmembrane region" description="Helical" evidence="2">
    <location>
        <begin position="228"/>
        <end position="248"/>
    </location>
</feature>
<feature type="transmembrane region" description="Helical" evidence="2">
    <location>
        <begin position="298"/>
        <end position="318"/>
    </location>
</feature>
<feature type="topological domain" description="Mitochondrial intermembrane" evidence="1">
    <location>
        <begin position="319"/>
        <end position="329"/>
    </location>
</feature>
<feature type="region of interest" description="Disordered" evidence="3">
    <location>
        <begin position="27"/>
        <end position="55"/>
    </location>
</feature>
<feature type="compositionally biased region" description="Pro residues" evidence="3">
    <location>
        <begin position="32"/>
        <end position="44"/>
    </location>
</feature>
<evidence type="ECO:0000250" key="1">
    <source>
        <dbReference type="UniProtKB" id="Q93YW7"/>
    </source>
</evidence>
<evidence type="ECO:0000255" key="2"/>
<evidence type="ECO:0000256" key="3">
    <source>
        <dbReference type="SAM" id="MobiDB-lite"/>
    </source>
</evidence>
<evidence type="ECO:0000305" key="4"/>
<gene>
    <name type="ordered locus">Os03g0283600</name>
    <name type="ordered locus">LOC_Os03g17520</name>
</gene>
<keyword id="KW-0444">Lipid biosynthesis</keyword>
<keyword id="KW-0443">Lipid metabolism</keyword>
<keyword id="KW-0472">Membrane</keyword>
<keyword id="KW-0496">Mitochondrion</keyword>
<keyword id="KW-0999">Mitochondrion inner membrane</keyword>
<keyword id="KW-0594">Phospholipid biosynthesis</keyword>
<keyword id="KW-1208">Phospholipid metabolism</keyword>
<keyword id="KW-1185">Reference proteome</keyword>
<keyword id="KW-0808">Transferase</keyword>
<keyword id="KW-0809">Transit peptide</keyword>
<keyword id="KW-0812">Transmembrane</keyword>
<keyword id="KW-1133">Transmembrane helix</keyword>